<comment type="function">
    <text evidence="2">One of the essential components for the initiation of protein synthesis. Protects formylmethionyl-tRNA from spontaneous hydrolysis and promotes its binding to the 30S ribosomal subunits. Also involved in the hydrolysis of GTP during the formation of the 70S ribosomal complex.</text>
</comment>
<comment type="subcellular location">
    <subcellularLocation>
        <location evidence="2">Cytoplasm</location>
    </subcellularLocation>
</comment>
<comment type="similarity">
    <text evidence="2">Belongs to the TRAFAC class translation factor GTPase superfamily. Classic translation factor GTPase family. IF-2 subfamily.</text>
</comment>
<sequence>MSKIRVHEYAKKHNISSKDLMTKLKEMNIEVSNHMTMLDDEVVNKLDNEYQTEKPSVADEFEVEEKVVRSKKNSNKKKKKGKGNEDKRQENFAGRQQTQIVETPDKITFSGSLTVGDLAKKLSKEPSEIIKKLFMLGIMATINQDLDKDTIELIANDYGIEVEEEVIVSETEFETFIDEQDDEENLKERPAVVTIMGHVDHGKTTLLDSIRNSKVTAGEAGGITQHIGAYQVEVNDKKITFLDTPGHAAFTTMRARGAQVTDITILVVAADDGVMPQTVEAINHAKAAGVPIIVAVNKMDKPAANPDRVMQELTEYELVPEAWGGDTIFVPISAIQGEGIDNLLEMILLVSEVEEYKANPNRYATGTVIEAQLDKGKGTIATLLVQNGTLRVGDPIVVGTSFGRVRAMVSDIGRRVKVAGPSTPVEITGLNEVPQAGDRFMAFADEKKARQIGESRAQEALVAQRGEKSKLSLEDLFQQIQEGDVKEINLIVKADVQGSVEAMAASLRKIDVEGVKVKIIHTGVGAITESDIILASASNAIVIGFNVRPDVNAKRTAELENVDIRLHRIIYKVIEEIEAAMQGMLDPEFEEKVIGQAEVRQTFKVTKVGTIAGCYVTDGKITRDSGVRIIRDGVVIFEGQLDTLKRFKDDVKEVAQNYECGITIERYNDLKEGDIIEAYIMEEVKR</sequence>
<gene>
    <name evidence="2" type="primary">infB</name>
    <name type="ordered locus">BC_3811</name>
</gene>
<protein>
    <recommendedName>
        <fullName evidence="2">Translation initiation factor IF-2</fullName>
    </recommendedName>
</protein>
<proteinExistence type="inferred from homology"/>
<dbReference type="EMBL" id="AE016877">
    <property type="protein sequence ID" value="AAP10734.1"/>
    <property type="molecule type" value="Genomic_DNA"/>
</dbReference>
<dbReference type="RefSeq" id="NP_833533.1">
    <property type="nucleotide sequence ID" value="NC_004722.1"/>
</dbReference>
<dbReference type="RefSeq" id="WP_000036343.1">
    <property type="nucleotide sequence ID" value="NZ_CP138336.1"/>
</dbReference>
<dbReference type="SMR" id="Q812X7"/>
<dbReference type="STRING" id="226900.BC_3811"/>
<dbReference type="KEGG" id="bce:BC3811"/>
<dbReference type="PATRIC" id="fig|226900.8.peg.3928"/>
<dbReference type="HOGENOM" id="CLU_006301_5_1_9"/>
<dbReference type="OrthoDB" id="9811804at2"/>
<dbReference type="Proteomes" id="UP000001417">
    <property type="component" value="Chromosome"/>
</dbReference>
<dbReference type="GO" id="GO:0005737">
    <property type="term" value="C:cytoplasm"/>
    <property type="evidence" value="ECO:0000318"/>
    <property type="project" value="GO_Central"/>
</dbReference>
<dbReference type="GO" id="GO:0005829">
    <property type="term" value="C:cytosol"/>
    <property type="evidence" value="ECO:0000318"/>
    <property type="project" value="GO_Central"/>
</dbReference>
<dbReference type="GO" id="GO:0005525">
    <property type="term" value="F:GTP binding"/>
    <property type="evidence" value="ECO:0007669"/>
    <property type="project" value="UniProtKB-KW"/>
</dbReference>
<dbReference type="GO" id="GO:0003924">
    <property type="term" value="F:GTPase activity"/>
    <property type="evidence" value="ECO:0007669"/>
    <property type="project" value="UniProtKB-UniRule"/>
</dbReference>
<dbReference type="GO" id="GO:0003743">
    <property type="term" value="F:translation initiation factor activity"/>
    <property type="evidence" value="ECO:0000318"/>
    <property type="project" value="GO_Central"/>
</dbReference>
<dbReference type="GO" id="GO:0006413">
    <property type="term" value="P:translational initiation"/>
    <property type="evidence" value="ECO:0000318"/>
    <property type="project" value="GO_Central"/>
</dbReference>
<dbReference type="CDD" id="cd01887">
    <property type="entry name" value="IF2_eIF5B"/>
    <property type="match status" value="1"/>
</dbReference>
<dbReference type="CDD" id="cd03702">
    <property type="entry name" value="IF2_mtIF2_II"/>
    <property type="match status" value="1"/>
</dbReference>
<dbReference type="CDD" id="cd03692">
    <property type="entry name" value="mtIF2_IVc"/>
    <property type="match status" value="1"/>
</dbReference>
<dbReference type="FunFam" id="1.10.10.2480:FF:000001">
    <property type="entry name" value="Translation initiation factor IF-2"/>
    <property type="match status" value="1"/>
</dbReference>
<dbReference type="FunFam" id="2.40.30.10:FF:000007">
    <property type="entry name" value="Translation initiation factor IF-2"/>
    <property type="match status" value="1"/>
</dbReference>
<dbReference type="FunFam" id="2.40.30.10:FF:000008">
    <property type="entry name" value="Translation initiation factor IF-2"/>
    <property type="match status" value="1"/>
</dbReference>
<dbReference type="FunFam" id="3.40.50.10050:FF:000001">
    <property type="entry name" value="Translation initiation factor IF-2"/>
    <property type="match status" value="1"/>
</dbReference>
<dbReference type="FunFam" id="3.40.50.300:FF:000019">
    <property type="entry name" value="Translation initiation factor IF-2"/>
    <property type="match status" value="1"/>
</dbReference>
<dbReference type="Gene3D" id="1.10.10.2480">
    <property type="match status" value="1"/>
</dbReference>
<dbReference type="Gene3D" id="3.40.50.300">
    <property type="entry name" value="P-loop containing nucleotide triphosphate hydrolases"/>
    <property type="match status" value="1"/>
</dbReference>
<dbReference type="Gene3D" id="2.40.30.10">
    <property type="entry name" value="Translation factors"/>
    <property type="match status" value="2"/>
</dbReference>
<dbReference type="Gene3D" id="3.40.50.10050">
    <property type="entry name" value="Translation initiation factor IF- 2, domain 3"/>
    <property type="match status" value="1"/>
</dbReference>
<dbReference type="HAMAP" id="MF_00100_B">
    <property type="entry name" value="IF_2_B"/>
    <property type="match status" value="1"/>
</dbReference>
<dbReference type="InterPro" id="IPR053905">
    <property type="entry name" value="EF-G-like_DII"/>
</dbReference>
<dbReference type="InterPro" id="IPR044145">
    <property type="entry name" value="IF2_II"/>
</dbReference>
<dbReference type="InterPro" id="IPR006847">
    <property type="entry name" value="IF2_N"/>
</dbReference>
<dbReference type="InterPro" id="IPR027417">
    <property type="entry name" value="P-loop_NTPase"/>
</dbReference>
<dbReference type="InterPro" id="IPR005225">
    <property type="entry name" value="Small_GTP-bd"/>
</dbReference>
<dbReference type="InterPro" id="IPR000795">
    <property type="entry name" value="T_Tr_GTP-bd_dom"/>
</dbReference>
<dbReference type="InterPro" id="IPR000178">
    <property type="entry name" value="TF_IF2_bacterial-like"/>
</dbReference>
<dbReference type="InterPro" id="IPR015760">
    <property type="entry name" value="TIF_IF2"/>
</dbReference>
<dbReference type="InterPro" id="IPR023115">
    <property type="entry name" value="TIF_IF2_dom3"/>
</dbReference>
<dbReference type="InterPro" id="IPR036925">
    <property type="entry name" value="TIF_IF2_dom3_sf"/>
</dbReference>
<dbReference type="InterPro" id="IPR009000">
    <property type="entry name" value="Transl_B-barrel_sf"/>
</dbReference>
<dbReference type="NCBIfam" id="TIGR00487">
    <property type="entry name" value="IF-2"/>
    <property type="match status" value="1"/>
</dbReference>
<dbReference type="NCBIfam" id="TIGR00231">
    <property type="entry name" value="small_GTP"/>
    <property type="match status" value="1"/>
</dbReference>
<dbReference type="PANTHER" id="PTHR43381:SF5">
    <property type="entry name" value="TR-TYPE G DOMAIN-CONTAINING PROTEIN"/>
    <property type="match status" value="1"/>
</dbReference>
<dbReference type="PANTHER" id="PTHR43381">
    <property type="entry name" value="TRANSLATION INITIATION FACTOR IF-2-RELATED"/>
    <property type="match status" value="1"/>
</dbReference>
<dbReference type="Pfam" id="PF22042">
    <property type="entry name" value="EF-G_D2"/>
    <property type="match status" value="1"/>
</dbReference>
<dbReference type="Pfam" id="PF00009">
    <property type="entry name" value="GTP_EFTU"/>
    <property type="match status" value="1"/>
</dbReference>
<dbReference type="Pfam" id="PF11987">
    <property type="entry name" value="IF-2"/>
    <property type="match status" value="1"/>
</dbReference>
<dbReference type="Pfam" id="PF04760">
    <property type="entry name" value="IF2_N"/>
    <property type="match status" value="2"/>
</dbReference>
<dbReference type="SUPFAM" id="SSF52156">
    <property type="entry name" value="Initiation factor IF2/eIF5b, domain 3"/>
    <property type="match status" value="1"/>
</dbReference>
<dbReference type="SUPFAM" id="SSF52540">
    <property type="entry name" value="P-loop containing nucleoside triphosphate hydrolases"/>
    <property type="match status" value="1"/>
</dbReference>
<dbReference type="SUPFAM" id="SSF50447">
    <property type="entry name" value="Translation proteins"/>
    <property type="match status" value="2"/>
</dbReference>
<dbReference type="PROSITE" id="PS51722">
    <property type="entry name" value="G_TR_2"/>
    <property type="match status" value="1"/>
</dbReference>
<dbReference type="PROSITE" id="PS01176">
    <property type="entry name" value="IF2"/>
    <property type="match status" value="1"/>
</dbReference>
<reference key="1">
    <citation type="journal article" date="2003" name="Nature">
        <title>Genome sequence of Bacillus cereus and comparative analysis with Bacillus anthracis.</title>
        <authorList>
            <person name="Ivanova N."/>
            <person name="Sorokin A."/>
            <person name="Anderson I."/>
            <person name="Galleron N."/>
            <person name="Candelon B."/>
            <person name="Kapatral V."/>
            <person name="Bhattacharyya A."/>
            <person name="Reznik G."/>
            <person name="Mikhailova N."/>
            <person name="Lapidus A."/>
            <person name="Chu L."/>
            <person name="Mazur M."/>
            <person name="Goltsman E."/>
            <person name="Larsen N."/>
            <person name="D'Souza M."/>
            <person name="Walunas T."/>
            <person name="Grechkin Y."/>
            <person name="Pusch G."/>
            <person name="Haselkorn R."/>
            <person name="Fonstein M."/>
            <person name="Ehrlich S.D."/>
            <person name="Overbeek R."/>
            <person name="Kyrpides N.C."/>
        </authorList>
    </citation>
    <scope>NUCLEOTIDE SEQUENCE [LARGE SCALE GENOMIC DNA]</scope>
    <source>
        <strain>ATCC 14579 / DSM 31 / CCUG 7414 / JCM 2152 / NBRC 15305 / NCIMB 9373 / NCTC 2599 / NRRL B-3711</strain>
    </source>
</reference>
<organism>
    <name type="scientific">Bacillus cereus (strain ATCC 14579 / DSM 31 / CCUG 7414 / JCM 2152 / NBRC 15305 / NCIMB 9373 / NCTC 2599 / NRRL B-3711)</name>
    <dbReference type="NCBI Taxonomy" id="226900"/>
    <lineage>
        <taxon>Bacteria</taxon>
        <taxon>Bacillati</taxon>
        <taxon>Bacillota</taxon>
        <taxon>Bacilli</taxon>
        <taxon>Bacillales</taxon>
        <taxon>Bacillaceae</taxon>
        <taxon>Bacillus</taxon>
        <taxon>Bacillus cereus group</taxon>
    </lineage>
</organism>
<feature type="chain" id="PRO_0000137168" description="Translation initiation factor IF-2">
    <location>
        <begin position="1"/>
        <end position="686"/>
    </location>
</feature>
<feature type="domain" description="tr-type G">
    <location>
        <begin position="188"/>
        <end position="357"/>
    </location>
</feature>
<feature type="region of interest" description="Disordered" evidence="3">
    <location>
        <begin position="61"/>
        <end position="98"/>
    </location>
</feature>
<feature type="region of interest" description="G1" evidence="1">
    <location>
        <begin position="197"/>
        <end position="204"/>
    </location>
</feature>
<feature type="region of interest" description="G2" evidence="1">
    <location>
        <begin position="222"/>
        <end position="226"/>
    </location>
</feature>
<feature type="region of interest" description="G3" evidence="1">
    <location>
        <begin position="243"/>
        <end position="246"/>
    </location>
</feature>
<feature type="region of interest" description="G4" evidence="1">
    <location>
        <begin position="297"/>
        <end position="300"/>
    </location>
</feature>
<feature type="region of interest" description="G5" evidence="1">
    <location>
        <begin position="333"/>
        <end position="335"/>
    </location>
</feature>
<feature type="compositionally biased region" description="Basic residues" evidence="3">
    <location>
        <begin position="69"/>
        <end position="81"/>
    </location>
</feature>
<feature type="binding site" evidence="2">
    <location>
        <begin position="197"/>
        <end position="204"/>
    </location>
    <ligand>
        <name>GTP</name>
        <dbReference type="ChEBI" id="CHEBI:37565"/>
    </ligand>
</feature>
<feature type="binding site" evidence="2">
    <location>
        <begin position="243"/>
        <end position="247"/>
    </location>
    <ligand>
        <name>GTP</name>
        <dbReference type="ChEBI" id="CHEBI:37565"/>
    </ligand>
</feature>
<feature type="binding site" evidence="2">
    <location>
        <begin position="297"/>
        <end position="300"/>
    </location>
    <ligand>
        <name>GTP</name>
        <dbReference type="ChEBI" id="CHEBI:37565"/>
    </ligand>
</feature>
<evidence type="ECO:0000250" key="1"/>
<evidence type="ECO:0000255" key="2">
    <source>
        <dbReference type="HAMAP-Rule" id="MF_00100"/>
    </source>
</evidence>
<evidence type="ECO:0000256" key="3">
    <source>
        <dbReference type="SAM" id="MobiDB-lite"/>
    </source>
</evidence>
<accession>Q812X7</accession>
<keyword id="KW-0963">Cytoplasm</keyword>
<keyword id="KW-0342">GTP-binding</keyword>
<keyword id="KW-0396">Initiation factor</keyword>
<keyword id="KW-0547">Nucleotide-binding</keyword>
<keyword id="KW-0648">Protein biosynthesis</keyword>
<keyword id="KW-1185">Reference proteome</keyword>
<name>IF2_BACCR</name>